<sequence>MFTKILGTGSYLPAHIRSNADLEKMVDTSDEWIVTRTGIRERRIARADETVSSMGRDAAEQALTMAGIAVQKVGMIIVATTSSSHAFPSSACQIQRELGINDCIAFDLAAACAGFSYALSVADNYIKNGAVEYALVVGSDALSHTLDPEDRGTLILFGDGAGAAVLGRSAEPGIISTHLHADGHYGDLLTLPYHNRLDPAASAYLTMSGNEVFKVAVTELAHIVDETLSANGLDRSELDWLVPHQANLRIITATAKRLGMGMEKVVVTLDRHGNTSAASVPLALDEAVRDGRIQPGHLVLLEAFGGGFTWGSALLRF</sequence>
<evidence type="ECO:0000255" key="1">
    <source>
        <dbReference type="HAMAP-Rule" id="MF_01815"/>
    </source>
</evidence>
<accession>Q2NU42</accession>
<reference key="1">
    <citation type="journal article" date="2006" name="Genome Res.">
        <title>Massive genome erosion and functional adaptations provide insights into the symbiotic lifestyle of Sodalis glossinidius in the tsetse host.</title>
        <authorList>
            <person name="Toh H."/>
            <person name="Weiss B.L."/>
            <person name="Perkin S.A.H."/>
            <person name="Yamashita A."/>
            <person name="Oshima K."/>
            <person name="Hattori M."/>
            <person name="Aksoy S."/>
        </authorList>
    </citation>
    <scope>NUCLEOTIDE SEQUENCE [LARGE SCALE GENOMIC DNA]</scope>
    <source>
        <strain>morsitans</strain>
    </source>
</reference>
<keyword id="KW-0012">Acyltransferase</keyword>
<keyword id="KW-0963">Cytoplasm</keyword>
<keyword id="KW-0275">Fatty acid biosynthesis</keyword>
<keyword id="KW-0276">Fatty acid metabolism</keyword>
<keyword id="KW-0444">Lipid biosynthesis</keyword>
<keyword id="KW-0443">Lipid metabolism</keyword>
<keyword id="KW-0511">Multifunctional enzyme</keyword>
<keyword id="KW-0808">Transferase</keyword>
<feature type="chain" id="PRO_1000056412" description="Beta-ketoacyl-[acyl-carrier-protein] synthase III">
    <location>
        <begin position="1"/>
        <end position="317"/>
    </location>
</feature>
<feature type="region of interest" description="ACP-binding" evidence="1">
    <location>
        <begin position="245"/>
        <end position="249"/>
    </location>
</feature>
<feature type="active site" evidence="1">
    <location>
        <position position="112"/>
    </location>
</feature>
<feature type="active site" evidence="1">
    <location>
        <position position="244"/>
    </location>
</feature>
<feature type="active site" evidence="1">
    <location>
        <position position="274"/>
    </location>
</feature>
<protein>
    <recommendedName>
        <fullName evidence="1">Beta-ketoacyl-[acyl-carrier-protein] synthase III</fullName>
        <shortName evidence="1">Beta-ketoacyl-ACP synthase III</shortName>
        <shortName evidence="1">KAS III</shortName>
        <ecNumber evidence="1">2.3.1.180</ecNumber>
    </recommendedName>
    <alternativeName>
        <fullName evidence="1">3-oxoacyl-[acyl-carrier-protein] synthase 3</fullName>
    </alternativeName>
    <alternativeName>
        <fullName evidence="1">3-oxoacyl-[acyl-carrier-protein] synthase III</fullName>
    </alternativeName>
</protein>
<name>FABH_SODGM</name>
<dbReference type="EC" id="2.3.1.180" evidence="1"/>
<dbReference type="EMBL" id="AP008232">
    <property type="protein sequence ID" value="BAE74333.1"/>
    <property type="molecule type" value="Genomic_DNA"/>
</dbReference>
<dbReference type="RefSeq" id="WP_011410918.1">
    <property type="nucleotide sequence ID" value="NC_007712.1"/>
</dbReference>
<dbReference type="SMR" id="Q2NU42"/>
<dbReference type="STRING" id="343509.SG1058"/>
<dbReference type="KEGG" id="sgl:SG1058"/>
<dbReference type="eggNOG" id="COG0332">
    <property type="taxonomic scope" value="Bacteria"/>
</dbReference>
<dbReference type="HOGENOM" id="CLU_039592_4_1_6"/>
<dbReference type="OrthoDB" id="9815506at2"/>
<dbReference type="BioCyc" id="SGLO343509:SGP1_RS09145-MONOMER"/>
<dbReference type="UniPathway" id="UPA00094"/>
<dbReference type="Proteomes" id="UP000001932">
    <property type="component" value="Chromosome"/>
</dbReference>
<dbReference type="GO" id="GO:0005737">
    <property type="term" value="C:cytoplasm"/>
    <property type="evidence" value="ECO:0007669"/>
    <property type="project" value="UniProtKB-SubCell"/>
</dbReference>
<dbReference type="GO" id="GO:0004315">
    <property type="term" value="F:3-oxoacyl-[acyl-carrier-protein] synthase activity"/>
    <property type="evidence" value="ECO:0007669"/>
    <property type="project" value="InterPro"/>
</dbReference>
<dbReference type="GO" id="GO:0033818">
    <property type="term" value="F:beta-ketoacyl-acyl-carrier-protein synthase III activity"/>
    <property type="evidence" value="ECO:0007669"/>
    <property type="project" value="UniProtKB-UniRule"/>
</dbReference>
<dbReference type="GO" id="GO:0006633">
    <property type="term" value="P:fatty acid biosynthetic process"/>
    <property type="evidence" value="ECO:0007669"/>
    <property type="project" value="UniProtKB-UniRule"/>
</dbReference>
<dbReference type="CDD" id="cd00830">
    <property type="entry name" value="KAS_III"/>
    <property type="match status" value="1"/>
</dbReference>
<dbReference type="FunFam" id="3.40.47.10:FF:000004">
    <property type="entry name" value="3-oxoacyl-[acyl-carrier-protein] synthase 3"/>
    <property type="match status" value="1"/>
</dbReference>
<dbReference type="Gene3D" id="3.40.47.10">
    <property type="match status" value="1"/>
</dbReference>
<dbReference type="HAMAP" id="MF_01815">
    <property type="entry name" value="FabH"/>
    <property type="match status" value="1"/>
</dbReference>
<dbReference type="InterPro" id="IPR013747">
    <property type="entry name" value="ACP_syn_III_C"/>
</dbReference>
<dbReference type="InterPro" id="IPR013751">
    <property type="entry name" value="ACP_syn_III_N"/>
</dbReference>
<dbReference type="InterPro" id="IPR004655">
    <property type="entry name" value="FabH"/>
</dbReference>
<dbReference type="InterPro" id="IPR016039">
    <property type="entry name" value="Thiolase-like"/>
</dbReference>
<dbReference type="NCBIfam" id="TIGR00747">
    <property type="entry name" value="fabH"/>
    <property type="match status" value="1"/>
</dbReference>
<dbReference type="NCBIfam" id="NF006829">
    <property type="entry name" value="PRK09352.1"/>
    <property type="match status" value="1"/>
</dbReference>
<dbReference type="PANTHER" id="PTHR43091">
    <property type="entry name" value="3-OXOACYL-[ACYL-CARRIER-PROTEIN] SYNTHASE"/>
    <property type="match status" value="1"/>
</dbReference>
<dbReference type="PANTHER" id="PTHR43091:SF1">
    <property type="entry name" value="BETA-KETOACYL-[ACYL-CARRIER-PROTEIN] SYNTHASE III, CHLOROPLASTIC"/>
    <property type="match status" value="1"/>
</dbReference>
<dbReference type="Pfam" id="PF08545">
    <property type="entry name" value="ACP_syn_III"/>
    <property type="match status" value="1"/>
</dbReference>
<dbReference type="Pfam" id="PF08541">
    <property type="entry name" value="ACP_syn_III_C"/>
    <property type="match status" value="1"/>
</dbReference>
<dbReference type="SUPFAM" id="SSF53901">
    <property type="entry name" value="Thiolase-like"/>
    <property type="match status" value="1"/>
</dbReference>
<organism>
    <name type="scientific">Sodalis glossinidius (strain morsitans)</name>
    <dbReference type="NCBI Taxonomy" id="343509"/>
    <lineage>
        <taxon>Bacteria</taxon>
        <taxon>Pseudomonadati</taxon>
        <taxon>Pseudomonadota</taxon>
        <taxon>Gammaproteobacteria</taxon>
        <taxon>Enterobacterales</taxon>
        <taxon>Bruguierivoracaceae</taxon>
        <taxon>Sodalis</taxon>
    </lineage>
</organism>
<gene>
    <name evidence="1" type="primary">fabH</name>
    <name type="ordered locus">SG1058</name>
</gene>
<comment type="function">
    <text evidence="1">Catalyzes the condensation reaction of fatty acid synthesis by the addition to an acyl acceptor of two carbons from malonyl-ACP. Catalyzes the first condensation reaction which initiates fatty acid synthesis and may therefore play a role in governing the total rate of fatty acid production. Possesses both acetoacetyl-ACP synthase and acetyl transacylase activities. Its substrate specificity determines the biosynthesis of branched-chain and/or straight-chain of fatty acids.</text>
</comment>
<comment type="catalytic activity">
    <reaction evidence="1">
        <text>malonyl-[ACP] + acetyl-CoA + H(+) = 3-oxobutanoyl-[ACP] + CO2 + CoA</text>
        <dbReference type="Rhea" id="RHEA:12080"/>
        <dbReference type="Rhea" id="RHEA-COMP:9623"/>
        <dbReference type="Rhea" id="RHEA-COMP:9625"/>
        <dbReference type="ChEBI" id="CHEBI:15378"/>
        <dbReference type="ChEBI" id="CHEBI:16526"/>
        <dbReference type="ChEBI" id="CHEBI:57287"/>
        <dbReference type="ChEBI" id="CHEBI:57288"/>
        <dbReference type="ChEBI" id="CHEBI:78449"/>
        <dbReference type="ChEBI" id="CHEBI:78450"/>
        <dbReference type="EC" id="2.3.1.180"/>
    </reaction>
</comment>
<comment type="pathway">
    <text evidence="1">Lipid metabolism; fatty acid biosynthesis.</text>
</comment>
<comment type="subunit">
    <text evidence="1">Homodimer.</text>
</comment>
<comment type="subcellular location">
    <subcellularLocation>
        <location evidence="1">Cytoplasm</location>
    </subcellularLocation>
</comment>
<comment type="domain">
    <text evidence="1">The last Arg residue of the ACP-binding site is essential for the weak association between ACP/AcpP and FabH.</text>
</comment>
<comment type="similarity">
    <text evidence="1">Belongs to the thiolase-like superfamily. FabH family.</text>
</comment>
<proteinExistence type="inferred from homology"/>